<reference key="1">
    <citation type="journal article" date="1988" name="Nature">
        <title>The neurotrophic factor neuroleukin is 90% homologous with phosphohexose isomerase.</title>
        <authorList>
            <person name="Chaput M."/>
            <person name="Claes V."/>
            <person name="Portetelle D."/>
            <person name="Clutdts I."/>
            <person name="Cravador A."/>
            <person name="Burny A."/>
            <person name="Gras H."/>
            <person name="Tartar A."/>
        </authorList>
    </citation>
    <scope>NUCLEOTIDE SEQUENCE [MRNA]</scope>
</reference>
<reference key="2">
    <citation type="submission" date="1988-08" db="EMBL/GenBank/DDBJ databases">
        <authorList>
            <person name="Burny A."/>
        </authorList>
    </citation>
    <scope>SEQUENCE REVISION</scope>
</reference>
<reference key="3">
    <citation type="journal article" date="1994" name="Gene">
        <title>Structure of the gene encoding pig phosphoglucose isomerase.</title>
        <authorList>
            <person name="Claes V."/>
            <person name="Kettmann R."/>
            <person name="Burny A."/>
        </authorList>
    </citation>
    <scope>NUCLEOTIDE SEQUENCE [GENOMIC DNA]</scope>
</reference>
<reference key="4">
    <citation type="journal article" date="1990" name="Biochim. Biophys. Acta">
        <title>Sequence analysis of the pig phosphoglucose isomerase gene promoter region.</title>
        <authorList>
            <person name="Claes V."/>
            <person name="Taquet A.N."/>
            <person name="Kettmann R."/>
            <person name="Burny A."/>
        </authorList>
    </citation>
    <scope>NUCLEOTIDE SEQUENCE [MRNA] OF 1-17</scope>
    <source>
        <strain>Belgian Landrace</strain>
    </source>
</reference>
<reference key="5">
    <citation type="journal article" date="1987" name="Anim. Genet.">
        <title>A partial cDNA clone for porcine glucosephosphate isomerase: isolation, characterization and use in detection of restriction fragment length polymorphisms.</title>
        <authorList>
            <person name="Davies W."/>
            <person name="Harbitz I."/>
            <person name="Hauge J.G."/>
        </authorList>
    </citation>
    <scope>NUCLEOTIDE SEQUENCE [MRNA] OF 238-357</scope>
</reference>
<reference key="6">
    <citation type="journal article" date="1974" name="J. Mol. Biol.">
        <title>Three-dimensional structure of pig muscle phosphoglucose isomerase at 6-A resolution.</title>
        <authorList>
            <person name="Muirhead H."/>
            <person name="Shaw P.J."/>
        </authorList>
    </citation>
    <scope>X-RAY CRYSTALLOGRAPHY (6.0 ANGSTROMS)</scope>
</reference>
<reference key="7">
    <citation type="journal article" date="1981" name="Philos. Trans. R. Soc. Lond., B, Biol. Sci.">
        <title>Glucose-6-phosphate isomerase.</title>
        <authorList>
            <person name="Achari A."/>
            <person name="Marshall S.E."/>
            <person name="Muirhead H."/>
            <person name="Palmieri R.H."/>
            <person name="Noltmann E.A."/>
        </authorList>
    </citation>
    <scope>X-RAY CRYSTALLOGRAPHY (2.6 ANGSTROMS)</scope>
    <scope>PROTEIN SEQUENCE OF 554-558</scope>
</reference>
<reference key="8">
    <citation type="journal article" date="2002" name="Proteins">
        <title>Crystal structure of phosphoglucose isomerase from pig muscle and its complex with 5-phosphoarabinonate.</title>
        <authorList>
            <person name="Davies C."/>
            <person name="Muirhead H."/>
        </authorList>
    </citation>
    <scope>X-RAY CRYSTALLOGRAPHY (2.5 ANGSTROMS) ALONE AND IN COMPLEX WITH 5-PHOSPHOARABINONATE</scope>
</reference>
<sequence>MAALTQNPQFKKLQTWYHEHRSDLNLRRLFEGDKDRFNHFSLNLNTNHGRILLDYSKNLVTEAVMQMLVDLAKSRGVEAARERMFNGEKINFTEDRAVLHVALRNRSNTPILVDGKDVMPEVNRVLEKMKSFCKRVRSGEWKGYSGKSITDVINIGIGGSDLGPLMVTEALKPYSAEGPRVWFVSNIDGTHIAKTLATLNPESSLFIIASKTFTTQETITNAETAKEWFLQSAKDPSAVAKHFVALSTNTTKVKEFGIDPQNMFEFWDWVGGRYSLWSAIGLSIALHVGFDNFEQLLSGAHWMDQHFRTTPLEKNAPVLLALLGIWYINFFGCETHAMLPYDQYLHRFAAYFQQGDMESNGKYITKSGTRVDHQTGPIVWGEPGTNGQHAFYQLIHQGTKMIPCDFLIPVQTQHPIRKGLHHKILLANFLAQTEALMKGKSTEEARKELQAAGKSPEDFEKLLPHKVFEGNRPTNSIVFTKLTPFILGALIAMYEHKIFVQGVIWDINSFDQWGVELGKQLAKKIEPELDGSSPVTSHDSSTNGLINFIKQEREARSQ</sequence>
<gene>
    <name evidence="7" type="primary">GPI</name>
</gene>
<comment type="function">
    <text evidence="2 3">In the cytoplasm, catalyzes the conversion of glucose-6-phosphate to fructose-6-phosphate, the second step in glycolysis, and the reverse reaction during gluconeogenesis (By similarity). Besides it's role as a glycolytic enzyme, also acts as a secreted cytokine: acts as an angiogenic factor (AMF) that stimulates endothelial cell motility. Acts as a neurotrophic factor, neuroleukin, for spinal and sensory neurons. It is secreted by lectin-stimulated T-cells and induces immunoglobulin secretion (By similarity).</text>
</comment>
<comment type="catalytic activity">
    <reaction evidence="2">
        <text>alpha-D-glucose 6-phosphate = beta-D-fructose 6-phosphate</text>
        <dbReference type="Rhea" id="RHEA:11816"/>
        <dbReference type="ChEBI" id="CHEBI:57634"/>
        <dbReference type="ChEBI" id="CHEBI:58225"/>
        <dbReference type="EC" id="5.3.1.9"/>
    </reaction>
</comment>
<comment type="pathway">
    <text evidence="2">Carbohydrate degradation; glycolysis; D-glyceraldehyde 3-phosphate and glycerone phosphate from D-glucose: step 2/4.</text>
</comment>
<comment type="subunit">
    <text evidence="5">Homodimer in the catalytically active form, monomer in the secreted form.</text>
</comment>
<comment type="subcellular location">
    <subcellularLocation>
        <location evidence="2">Cytoplasm</location>
    </subcellularLocation>
    <subcellularLocation>
        <location evidence="2">Secreted</location>
    </subcellularLocation>
</comment>
<comment type="PTM">
    <text evidence="2">Phosphorylation at Ser-185 by CK2 has been shown to decrease enzymatic activity and may contribute to secretion by a non-classical secretory pathway.</text>
</comment>
<comment type="PTM">
    <text evidence="2">ISGylated.</text>
</comment>
<comment type="similarity">
    <text evidence="9">Belongs to the GPI family.</text>
</comment>
<accession>P08059</accession>
<accession>Q29556</accession>
<dbReference type="EC" id="5.3.1.9" evidence="3"/>
<dbReference type="EMBL" id="X07382">
    <property type="protein sequence ID" value="CAA30295.1"/>
    <property type="molecule type" value="mRNA"/>
</dbReference>
<dbReference type="EMBL" id="Z28396">
    <property type="protein sequence ID" value="CAA82246.1"/>
    <property type="molecule type" value="Genomic_DNA"/>
</dbReference>
<dbReference type="EMBL" id="Z28397">
    <property type="protein sequence ID" value="CAA82246.1"/>
    <property type="status" value="JOINED"/>
    <property type="molecule type" value="Genomic_DNA"/>
</dbReference>
<dbReference type="EMBL" id="Z28398">
    <property type="protein sequence ID" value="CAA82246.1"/>
    <property type="status" value="JOINED"/>
    <property type="molecule type" value="Genomic_DNA"/>
</dbReference>
<dbReference type="EMBL" id="Z28399">
    <property type="protein sequence ID" value="CAA82246.1"/>
    <property type="status" value="JOINED"/>
    <property type="molecule type" value="Genomic_DNA"/>
</dbReference>
<dbReference type="EMBL" id="Z28400">
    <property type="protein sequence ID" value="CAA82246.1"/>
    <property type="status" value="JOINED"/>
    <property type="molecule type" value="Genomic_DNA"/>
</dbReference>
<dbReference type="EMBL" id="Z28401">
    <property type="protein sequence ID" value="CAA82246.1"/>
    <property type="status" value="JOINED"/>
    <property type="molecule type" value="Genomic_DNA"/>
</dbReference>
<dbReference type="EMBL" id="Z28402">
    <property type="protein sequence ID" value="CAA82246.1"/>
    <property type="status" value="JOINED"/>
    <property type="molecule type" value="Genomic_DNA"/>
</dbReference>
<dbReference type="EMBL" id="Z28403">
    <property type="protein sequence ID" value="CAA82246.1"/>
    <property type="status" value="JOINED"/>
    <property type="molecule type" value="Genomic_DNA"/>
</dbReference>
<dbReference type="EMBL" id="Z28404">
    <property type="protein sequence ID" value="CAA82246.1"/>
    <property type="status" value="JOINED"/>
    <property type="molecule type" value="Genomic_DNA"/>
</dbReference>
<dbReference type="EMBL" id="X53719">
    <property type="protein sequence ID" value="CAA37755.1"/>
    <property type="molecule type" value="mRNA"/>
</dbReference>
<dbReference type="EMBL" id="M54975">
    <property type="protein sequence ID" value="AAA31048.1"/>
    <property type="molecule type" value="mRNA"/>
</dbReference>
<dbReference type="PIR" id="I47142">
    <property type="entry name" value="I47142"/>
</dbReference>
<dbReference type="PIR" id="S00895">
    <property type="entry name" value="NUPG"/>
</dbReference>
<dbReference type="RefSeq" id="NP_999495.1">
    <property type="nucleotide sequence ID" value="NM_214330.1"/>
</dbReference>
<dbReference type="PDB" id="1GZD">
    <property type="method" value="X-ray"/>
    <property type="resolution" value="2.50 A"/>
    <property type="chains" value="A=2-558"/>
</dbReference>
<dbReference type="PDB" id="1GZV">
    <property type="method" value="X-ray"/>
    <property type="resolution" value="3.51 A"/>
    <property type="chains" value="A=2-558"/>
</dbReference>
<dbReference type="PDBsum" id="1GZD"/>
<dbReference type="PDBsum" id="1GZV"/>
<dbReference type="SMR" id="P08059"/>
<dbReference type="FunCoup" id="P08059">
    <property type="interactions" value="1266"/>
</dbReference>
<dbReference type="STRING" id="9823.ENSSSCP00000003094"/>
<dbReference type="PaxDb" id="9823-ENSSSCP00000003094"/>
<dbReference type="PeptideAtlas" id="P08059"/>
<dbReference type="Ensembl" id="ENSSSCT00000003175.5">
    <property type="protein sequence ID" value="ENSSSCP00000003094.3"/>
    <property type="gene ID" value="ENSSSCG00000002873.5"/>
</dbReference>
<dbReference type="Ensembl" id="ENSSSCT00025047497.1">
    <property type="protein sequence ID" value="ENSSSCP00025020351.1"/>
    <property type="gene ID" value="ENSSSCG00025034806.1"/>
</dbReference>
<dbReference type="Ensembl" id="ENSSSCT00035108133.1">
    <property type="protein sequence ID" value="ENSSSCP00035046820.1"/>
    <property type="gene ID" value="ENSSSCG00035079108.1"/>
</dbReference>
<dbReference type="Ensembl" id="ENSSSCT00040087102.1">
    <property type="protein sequence ID" value="ENSSSCP00040038243.1"/>
    <property type="gene ID" value="ENSSSCG00040063535.1"/>
</dbReference>
<dbReference type="Ensembl" id="ENSSSCT00045030938.1">
    <property type="protein sequence ID" value="ENSSSCP00045021461.1"/>
    <property type="gene ID" value="ENSSSCG00045018132.1"/>
</dbReference>
<dbReference type="Ensembl" id="ENSSSCT00050068357.1">
    <property type="protein sequence ID" value="ENSSSCP00050029323.1"/>
    <property type="gene ID" value="ENSSSCG00050050209.1"/>
</dbReference>
<dbReference type="Ensembl" id="ENSSSCT00055037281.1">
    <property type="protein sequence ID" value="ENSSSCP00055029618.1"/>
    <property type="gene ID" value="ENSSSCG00055019026.1"/>
</dbReference>
<dbReference type="Ensembl" id="ENSSSCT00060052940.1">
    <property type="protein sequence ID" value="ENSSSCP00060022543.1"/>
    <property type="gene ID" value="ENSSSCG00060039122.1"/>
</dbReference>
<dbReference type="Ensembl" id="ENSSSCT00065071617.1">
    <property type="protein sequence ID" value="ENSSSCP00065031218.1"/>
    <property type="gene ID" value="ENSSSCG00065052281.1"/>
</dbReference>
<dbReference type="GeneID" id="397602"/>
<dbReference type="KEGG" id="ssc:397602"/>
<dbReference type="CTD" id="2821"/>
<dbReference type="VGNC" id="VGNC:97068">
    <property type="gene designation" value="GPI"/>
</dbReference>
<dbReference type="eggNOG" id="KOG2446">
    <property type="taxonomic scope" value="Eukaryota"/>
</dbReference>
<dbReference type="GeneTree" id="ENSGT00390000000707"/>
<dbReference type="InParanoid" id="P08059"/>
<dbReference type="OMA" id="DWYRQLW"/>
<dbReference type="OrthoDB" id="5831190at2759"/>
<dbReference type="Reactome" id="R-SSC-5628897">
    <property type="pathway name" value="TP53 Regulates Metabolic Genes"/>
</dbReference>
<dbReference type="Reactome" id="R-SSC-6798695">
    <property type="pathway name" value="Neutrophil degranulation"/>
</dbReference>
<dbReference type="Reactome" id="R-SSC-70171">
    <property type="pathway name" value="Glycolysis"/>
</dbReference>
<dbReference type="Reactome" id="R-SSC-70263">
    <property type="pathway name" value="Gluconeogenesis"/>
</dbReference>
<dbReference type="UniPathway" id="UPA00109">
    <property type="reaction ID" value="UER00181"/>
</dbReference>
<dbReference type="EvolutionaryTrace" id="P08059"/>
<dbReference type="Proteomes" id="UP000008227">
    <property type="component" value="Chromosome 6"/>
</dbReference>
<dbReference type="Proteomes" id="UP000314985">
    <property type="component" value="Unplaced"/>
</dbReference>
<dbReference type="Proteomes" id="UP000694570">
    <property type="component" value="Unplaced"/>
</dbReference>
<dbReference type="Proteomes" id="UP000694571">
    <property type="component" value="Unplaced"/>
</dbReference>
<dbReference type="Proteomes" id="UP000694720">
    <property type="component" value="Unplaced"/>
</dbReference>
<dbReference type="Proteomes" id="UP000694722">
    <property type="component" value="Unplaced"/>
</dbReference>
<dbReference type="Proteomes" id="UP000694723">
    <property type="component" value="Unplaced"/>
</dbReference>
<dbReference type="Proteomes" id="UP000694724">
    <property type="component" value="Unplaced"/>
</dbReference>
<dbReference type="Proteomes" id="UP000694725">
    <property type="component" value="Unplaced"/>
</dbReference>
<dbReference type="Proteomes" id="UP000694726">
    <property type="component" value="Unplaced"/>
</dbReference>
<dbReference type="Proteomes" id="UP000694727">
    <property type="component" value="Unplaced"/>
</dbReference>
<dbReference type="Proteomes" id="UP000694728">
    <property type="component" value="Unplaced"/>
</dbReference>
<dbReference type="Bgee" id="ENSSSCG00000002873">
    <property type="expression patterns" value="Expressed in semimembranosus muscle and 43 other cell types or tissues"/>
</dbReference>
<dbReference type="ExpressionAtlas" id="P08059">
    <property type="expression patterns" value="baseline and differential"/>
</dbReference>
<dbReference type="GO" id="GO:0060170">
    <property type="term" value="C:ciliary membrane"/>
    <property type="evidence" value="ECO:0007669"/>
    <property type="project" value="Ensembl"/>
</dbReference>
<dbReference type="GO" id="GO:0005829">
    <property type="term" value="C:cytosol"/>
    <property type="evidence" value="ECO:0000318"/>
    <property type="project" value="GO_Central"/>
</dbReference>
<dbReference type="GO" id="GO:0005615">
    <property type="term" value="C:extracellular space"/>
    <property type="evidence" value="ECO:0007669"/>
    <property type="project" value="UniProtKB-KW"/>
</dbReference>
<dbReference type="GO" id="GO:0097367">
    <property type="term" value="F:carbohydrate derivative binding"/>
    <property type="evidence" value="ECO:0007669"/>
    <property type="project" value="InterPro"/>
</dbReference>
<dbReference type="GO" id="GO:0005125">
    <property type="term" value="F:cytokine activity"/>
    <property type="evidence" value="ECO:0007669"/>
    <property type="project" value="UniProtKB-KW"/>
</dbReference>
<dbReference type="GO" id="GO:0004347">
    <property type="term" value="F:glucose-6-phosphate isomerase activity"/>
    <property type="evidence" value="ECO:0000250"/>
    <property type="project" value="UniProtKB"/>
</dbReference>
<dbReference type="GO" id="GO:0048029">
    <property type="term" value="F:monosaccharide binding"/>
    <property type="evidence" value="ECO:0000318"/>
    <property type="project" value="GO_Central"/>
</dbReference>
<dbReference type="GO" id="GO:0031625">
    <property type="term" value="F:ubiquitin protein ligase binding"/>
    <property type="evidence" value="ECO:0007669"/>
    <property type="project" value="Ensembl"/>
</dbReference>
<dbReference type="GO" id="GO:0061621">
    <property type="term" value="P:canonical glycolysis"/>
    <property type="evidence" value="ECO:0007669"/>
    <property type="project" value="Ensembl"/>
</dbReference>
<dbReference type="GO" id="GO:0034101">
    <property type="term" value="P:erythrocyte homeostasis"/>
    <property type="evidence" value="ECO:0007669"/>
    <property type="project" value="Ensembl"/>
</dbReference>
<dbReference type="GO" id="GO:0006002">
    <property type="term" value="P:fructose 6-phosphate metabolic process"/>
    <property type="evidence" value="ECO:0007669"/>
    <property type="project" value="Ensembl"/>
</dbReference>
<dbReference type="GO" id="GO:0006094">
    <property type="term" value="P:gluconeogenesis"/>
    <property type="evidence" value="ECO:0000318"/>
    <property type="project" value="GO_Central"/>
</dbReference>
<dbReference type="GO" id="GO:0051156">
    <property type="term" value="P:glucose 6-phosphate metabolic process"/>
    <property type="evidence" value="ECO:0000250"/>
    <property type="project" value="UniProtKB"/>
</dbReference>
<dbReference type="GO" id="GO:0042593">
    <property type="term" value="P:glucose homeostasis"/>
    <property type="evidence" value="ECO:0007669"/>
    <property type="project" value="Ensembl"/>
</dbReference>
<dbReference type="GO" id="GO:0006096">
    <property type="term" value="P:glycolytic process"/>
    <property type="evidence" value="ECO:0000318"/>
    <property type="project" value="GO_Central"/>
</dbReference>
<dbReference type="GO" id="GO:0001701">
    <property type="term" value="P:in utero embryonic development"/>
    <property type="evidence" value="ECO:0007669"/>
    <property type="project" value="Ensembl"/>
</dbReference>
<dbReference type="GO" id="GO:0001707">
    <property type="term" value="P:mesoderm formation"/>
    <property type="evidence" value="ECO:0007669"/>
    <property type="project" value="Ensembl"/>
</dbReference>
<dbReference type="GO" id="GO:0010595">
    <property type="term" value="P:positive regulation of endothelial cell migration"/>
    <property type="evidence" value="ECO:0007669"/>
    <property type="project" value="Ensembl"/>
</dbReference>
<dbReference type="GO" id="GO:0002639">
    <property type="term" value="P:positive regulation of immunoglobulin production"/>
    <property type="evidence" value="ECO:0007669"/>
    <property type="project" value="Ensembl"/>
</dbReference>
<dbReference type="CDD" id="cd05015">
    <property type="entry name" value="SIS_PGI_1"/>
    <property type="match status" value="1"/>
</dbReference>
<dbReference type="CDD" id="cd05016">
    <property type="entry name" value="SIS_PGI_2"/>
    <property type="match status" value="1"/>
</dbReference>
<dbReference type="FunFam" id="1.10.1390.10:FF:000001">
    <property type="entry name" value="Glucose-6-phosphate isomerase"/>
    <property type="match status" value="1"/>
</dbReference>
<dbReference type="FunFam" id="3.40.50.10490:FF:000004">
    <property type="entry name" value="Glucose-6-phosphate isomerase"/>
    <property type="match status" value="1"/>
</dbReference>
<dbReference type="FunFam" id="3.40.50.10490:FF:000093">
    <property type="entry name" value="Glucose-6-phosphate isomerase"/>
    <property type="match status" value="1"/>
</dbReference>
<dbReference type="Gene3D" id="1.10.1390.10">
    <property type="match status" value="1"/>
</dbReference>
<dbReference type="Gene3D" id="3.40.50.10490">
    <property type="entry name" value="Glucose-6-phosphate isomerase like protein, domain 1"/>
    <property type="match status" value="2"/>
</dbReference>
<dbReference type="HAMAP" id="MF_00473">
    <property type="entry name" value="G6P_isomerase"/>
    <property type="match status" value="1"/>
</dbReference>
<dbReference type="InterPro" id="IPR001672">
    <property type="entry name" value="G6P_Isomerase"/>
</dbReference>
<dbReference type="InterPro" id="IPR023096">
    <property type="entry name" value="G6P_Isomerase_C"/>
</dbReference>
<dbReference type="InterPro" id="IPR018189">
    <property type="entry name" value="Phosphoglucose_isomerase_CS"/>
</dbReference>
<dbReference type="InterPro" id="IPR046348">
    <property type="entry name" value="SIS_dom_sf"/>
</dbReference>
<dbReference type="InterPro" id="IPR035476">
    <property type="entry name" value="SIS_PGI_1"/>
</dbReference>
<dbReference type="InterPro" id="IPR035482">
    <property type="entry name" value="SIS_PGI_2"/>
</dbReference>
<dbReference type="NCBIfam" id="NF001211">
    <property type="entry name" value="PRK00179.1"/>
    <property type="match status" value="1"/>
</dbReference>
<dbReference type="PANTHER" id="PTHR11469">
    <property type="entry name" value="GLUCOSE-6-PHOSPHATE ISOMERASE"/>
    <property type="match status" value="1"/>
</dbReference>
<dbReference type="PANTHER" id="PTHR11469:SF1">
    <property type="entry name" value="GLUCOSE-6-PHOSPHATE ISOMERASE"/>
    <property type="match status" value="1"/>
</dbReference>
<dbReference type="Pfam" id="PF00342">
    <property type="entry name" value="PGI"/>
    <property type="match status" value="1"/>
</dbReference>
<dbReference type="PRINTS" id="PR00662">
    <property type="entry name" value="G6PISOMERASE"/>
</dbReference>
<dbReference type="SUPFAM" id="SSF53697">
    <property type="entry name" value="SIS domain"/>
    <property type="match status" value="1"/>
</dbReference>
<dbReference type="PROSITE" id="PS00765">
    <property type="entry name" value="P_GLUCOSE_ISOMERASE_1"/>
    <property type="match status" value="1"/>
</dbReference>
<dbReference type="PROSITE" id="PS00174">
    <property type="entry name" value="P_GLUCOSE_ISOMERASE_2"/>
    <property type="match status" value="1"/>
</dbReference>
<dbReference type="PROSITE" id="PS51463">
    <property type="entry name" value="P_GLUCOSE_ISOMERASE_3"/>
    <property type="match status" value="1"/>
</dbReference>
<evidence type="ECO:0000250" key="1"/>
<evidence type="ECO:0000250" key="2">
    <source>
        <dbReference type="UniProtKB" id="P06744"/>
    </source>
</evidence>
<evidence type="ECO:0000250" key="3">
    <source>
        <dbReference type="UniProtKB" id="P06745"/>
    </source>
</evidence>
<evidence type="ECO:0000250" key="4">
    <source>
        <dbReference type="UniProtKB" id="Q6P6V0"/>
    </source>
</evidence>
<evidence type="ECO:0000269" key="5">
    <source>
    </source>
</evidence>
<evidence type="ECO:0000303" key="6">
    <source>
    </source>
</evidence>
<evidence type="ECO:0000303" key="7">
    <source>
    </source>
</evidence>
<evidence type="ECO:0000303" key="8">
    <source>
    </source>
</evidence>
<evidence type="ECO:0000305" key="9"/>
<evidence type="ECO:0007829" key="10">
    <source>
        <dbReference type="PDB" id="1GZD"/>
    </source>
</evidence>
<organism>
    <name type="scientific">Sus scrofa</name>
    <name type="common">Pig</name>
    <dbReference type="NCBI Taxonomy" id="9823"/>
    <lineage>
        <taxon>Eukaryota</taxon>
        <taxon>Metazoa</taxon>
        <taxon>Chordata</taxon>
        <taxon>Craniata</taxon>
        <taxon>Vertebrata</taxon>
        <taxon>Euteleostomi</taxon>
        <taxon>Mammalia</taxon>
        <taxon>Eutheria</taxon>
        <taxon>Laurasiatheria</taxon>
        <taxon>Artiodactyla</taxon>
        <taxon>Suina</taxon>
        <taxon>Suidae</taxon>
        <taxon>Sus</taxon>
    </lineage>
</organism>
<protein>
    <recommendedName>
        <fullName evidence="7">Glucose-6-phosphate isomerase</fullName>
        <shortName evidence="7">GPI</shortName>
        <ecNumber evidence="3">5.3.1.9</ecNumber>
    </recommendedName>
    <alternativeName>
        <fullName evidence="2">Autocrine motility factor</fullName>
        <shortName evidence="2">AMF</shortName>
    </alternativeName>
    <alternativeName>
        <fullName evidence="6">Neuroleukin</fullName>
        <shortName evidence="6">NLK</shortName>
    </alternativeName>
    <alternativeName>
        <fullName evidence="8">Phosphoglucose isomerase</fullName>
        <shortName evidence="8">PGI</shortName>
    </alternativeName>
    <alternativeName>
        <fullName evidence="6">Phosphohexose isomerase</fullName>
        <shortName evidence="6">PHI</shortName>
    </alternativeName>
</protein>
<feature type="initiator methionine" description="Removed" evidence="2">
    <location>
        <position position="1"/>
    </location>
</feature>
<feature type="chain" id="PRO_0000180540" description="Glucose-6-phosphate isomerase">
    <location>
        <begin position="2"/>
        <end position="558"/>
    </location>
</feature>
<feature type="active site" description="Proton donor" evidence="3">
    <location>
        <position position="358"/>
    </location>
</feature>
<feature type="active site" evidence="3">
    <location>
        <position position="389"/>
    </location>
</feature>
<feature type="active site" evidence="3">
    <location>
        <position position="519"/>
    </location>
</feature>
<feature type="binding site" evidence="3">
    <location>
        <begin position="159"/>
        <end position="160"/>
    </location>
    <ligand>
        <name>D-glucose 6-phosphate</name>
        <dbReference type="ChEBI" id="CHEBI:61548"/>
    </ligand>
</feature>
<feature type="binding site" evidence="3">
    <location>
        <begin position="210"/>
        <end position="215"/>
    </location>
    <ligand>
        <name>D-glucose 6-phosphate</name>
        <dbReference type="ChEBI" id="CHEBI:61548"/>
    </ligand>
</feature>
<feature type="binding site" evidence="3">
    <location>
        <position position="354"/>
    </location>
    <ligand>
        <name>D-glucose 6-phosphate</name>
        <dbReference type="ChEBI" id="CHEBI:61548"/>
    </ligand>
</feature>
<feature type="binding site" evidence="3">
    <location>
        <position position="358"/>
    </location>
    <ligand>
        <name>D-glucose 6-phosphate</name>
        <dbReference type="ChEBI" id="CHEBI:61548"/>
    </ligand>
</feature>
<feature type="binding site" evidence="3">
    <location>
        <position position="389"/>
    </location>
    <ligand>
        <name>D-glucose 6-phosphate</name>
        <dbReference type="ChEBI" id="CHEBI:61548"/>
    </ligand>
</feature>
<feature type="binding site" evidence="3">
    <location>
        <position position="519"/>
    </location>
    <ligand>
        <name>D-glucose 6-phosphate</name>
        <dbReference type="ChEBI" id="CHEBI:61548"/>
    </ligand>
</feature>
<feature type="modified residue" description="N-acetylalanine" evidence="2">
    <location>
        <position position="2"/>
    </location>
</feature>
<feature type="modified residue" description="N6-acetyllysine" evidence="2">
    <location>
        <position position="12"/>
    </location>
</feature>
<feature type="modified residue" description="N6-(2-hydroxyisobutyryl)lysine" evidence="2">
    <location>
        <position position="34"/>
    </location>
</feature>
<feature type="modified residue" description="Phosphoserine" evidence="2">
    <location>
        <position position="107"/>
    </location>
</feature>
<feature type="modified residue" description="Phosphothreonine" evidence="2">
    <location>
        <position position="109"/>
    </location>
</feature>
<feature type="modified residue" description="N6-acetyllysine" evidence="2">
    <location>
        <position position="142"/>
    </location>
</feature>
<feature type="modified residue" description="Phosphoserine; by CK2" evidence="2">
    <location>
        <position position="185"/>
    </location>
</feature>
<feature type="modified residue" description="Phosphothreonine" evidence="4">
    <location>
        <position position="250"/>
    </location>
</feature>
<feature type="modified residue" description="N6-acetyllysine; alternate" evidence="3">
    <location>
        <position position="454"/>
    </location>
</feature>
<feature type="modified residue" description="N6-malonyllysine; alternate" evidence="1">
    <location>
        <position position="454"/>
    </location>
</feature>
<feature type="modified residue" description="N6-succinyllysine; alternate" evidence="3">
    <location>
        <position position="454"/>
    </location>
</feature>
<feature type="modified residue" description="Phosphoserine" evidence="2">
    <location>
        <position position="455"/>
    </location>
</feature>
<feature type="sequence conflict" description="In Ref. 3; CAA82246." evidence="9" ref="3">
    <location>
        <begin position="156"/>
        <end position="157"/>
    </location>
</feature>
<feature type="sequence conflict" description="In Ref. 5; AAA31048." evidence="9" ref="5">
    <original>Y</original>
    <variation>H</variation>
    <location>
        <position position="344"/>
    </location>
</feature>
<feature type="sequence conflict" description="In Ref. 3; CAA82246." evidence="9" ref="3">
    <original>RFAAYFQQGDMESNGKYITKSGTRVDHQTGPIVWGEPGTNGQHAFYQLIHQG</original>
    <variation>ALLPTSSRVTWSPTGSTSPSPAPVWTTRRAPLCGGSQGPMASMPSTSSS</variation>
    <location>
        <begin position="347"/>
        <end position="398"/>
    </location>
</feature>
<feature type="sequence conflict" description="In Ref. 3; CAA82246." evidence="9" ref="3">
    <original>KL</original>
    <variation>NV</variation>
    <location>
        <begin position="481"/>
        <end position="482"/>
    </location>
</feature>
<feature type="sequence conflict" description="In Ref. 3; CAA82246." evidence="9" ref="3">
    <original>K</original>
    <variation>M</variation>
    <location>
        <position position="550"/>
    </location>
</feature>
<feature type="helix" evidence="10">
    <location>
        <begin position="3"/>
        <end position="6"/>
    </location>
</feature>
<feature type="helix" evidence="10">
    <location>
        <begin position="8"/>
        <end position="20"/>
    </location>
</feature>
<feature type="helix" evidence="10">
    <location>
        <begin position="21"/>
        <end position="23"/>
    </location>
</feature>
<feature type="helix" evidence="10">
    <location>
        <begin position="26"/>
        <end position="32"/>
    </location>
</feature>
<feature type="helix" evidence="10">
    <location>
        <begin position="36"/>
        <end position="39"/>
    </location>
</feature>
<feature type="strand" evidence="10">
    <location>
        <begin position="40"/>
        <end position="45"/>
    </location>
</feature>
<feature type="strand" evidence="10">
    <location>
        <begin position="50"/>
        <end position="54"/>
    </location>
</feature>
<feature type="helix" evidence="10">
    <location>
        <begin position="62"/>
        <end position="74"/>
    </location>
</feature>
<feature type="helix" evidence="10">
    <location>
        <begin position="77"/>
        <end position="86"/>
    </location>
</feature>
<feature type="turn" evidence="10">
    <location>
        <begin position="92"/>
        <end position="95"/>
    </location>
</feature>
<feature type="helix" evidence="10">
    <location>
        <begin position="100"/>
        <end position="103"/>
    </location>
</feature>
<feature type="strand" evidence="10">
    <location>
        <begin position="116"/>
        <end position="118"/>
    </location>
</feature>
<feature type="helix" evidence="10">
    <location>
        <begin position="119"/>
        <end position="138"/>
    </location>
</feature>
<feature type="strand" evidence="10">
    <location>
        <begin position="151"/>
        <end position="155"/>
    </location>
</feature>
<feature type="helix" evidence="10">
    <location>
        <begin position="159"/>
        <end position="170"/>
    </location>
</feature>
<feature type="helix" evidence="10">
    <location>
        <begin position="172"/>
        <end position="175"/>
    </location>
</feature>
<feature type="strand" evidence="10">
    <location>
        <begin position="180"/>
        <end position="184"/>
    </location>
</feature>
<feature type="helix" evidence="10">
    <location>
        <begin position="189"/>
        <end position="196"/>
    </location>
</feature>
<feature type="helix" evidence="10">
    <location>
        <begin position="201"/>
        <end position="203"/>
    </location>
</feature>
<feature type="strand" evidence="10">
    <location>
        <begin position="204"/>
        <end position="209"/>
    </location>
</feature>
<feature type="strand" evidence="10">
    <location>
        <begin position="211"/>
        <end position="213"/>
    </location>
</feature>
<feature type="helix" evidence="10">
    <location>
        <begin position="216"/>
        <end position="233"/>
    </location>
</feature>
<feature type="helix" evidence="10">
    <location>
        <begin position="236"/>
        <end position="241"/>
    </location>
</feature>
<feature type="strand" evidence="10">
    <location>
        <begin position="243"/>
        <end position="248"/>
    </location>
</feature>
<feature type="helix" evidence="10">
    <location>
        <begin position="250"/>
        <end position="255"/>
    </location>
</feature>
<feature type="helix" evidence="10">
    <location>
        <begin position="260"/>
        <end position="262"/>
    </location>
</feature>
<feature type="strand" evidence="10">
    <location>
        <begin position="263"/>
        <end position="265"/>
    </location>
</feature>
<feature type="helix" evidence="10">
    <location>
        <begin position="272"/>
        <end position="274"/>
    </location>
</feature>
<feature type="turn" evidence="10">
    <location>
        <begin position="276"/>
        <end position="278"/>
    </location>
</feature>
<feature type="helix" evidence="10">
    <location>
        <begin position="279"/>
        <end position="281"/>
    </location>
</feature>
<feature type="helix" evidence="10">
    <location>
        <begin position="282"/>
        <end position="288"/>
    </location>
</feature>
<feature type="helix" evidence="10">
    <location>
        <begin position="290"/>
        <end position="309"/>
    </location>
</feature>
<feature type="helix" evidence="10">
    <location>
        <begin position="312"/>
        <end position="314"/>
    </location>
</feature>
<feature type="helix" evidence="10">
    <location>
        <begin position="316"/>
        <end position="329"/>
    </location>
</feature>
<feature type="strand" evidence="10">
    <location>
        <begin position="335"/>
        <end position="341"/>
    </location>
</feature>
<feature type="helix" evidence="10">
    <location>
        <begin position="343"/>
        <end position="345"/>
    </location>
</feature>
<feature type="helix" evidence="10">
    <location>
        <begin position="348"/>
        <end position="360"/>
    </location>
</feature>
<feature type="strand" evidence="10">
    <location>
        <begin position="378"/>
        <end position="380"/>
    </location>
</feature>
<feature type="helix" evidence="10">
    <location>
        <begin position="386"/>
        <end position="389"/>
    </location>
</feature>
<feature type="helix" evidence="10">
    <location>
        <begin position="392"/>
        <end position="397"/>
    </location>
</feature>
<feature type="strand" evidence="10">
    <location>
        <begin position="398"/>
        <end position="400"/>
    </location>
</feature>
<feature type="strand" evidence="10">
    <location>
        <begin position="404"/>
        <end position="411"/>
    </location>
</feature>
<feature type="helix" evidence="10">
    <location>
        <begin position="416"/>
        <end position="438"/>
    </location>
</feature>
<feature type="helix" evidence="10">
    <location>
        <begin position="442"/>
        <end position="451"/>
    </location>
</feature>
<feature type="helix" evidence="10">
    <location>
        <begin position="456"/>
        <end position="459"/>
    </location>
</feature>
<feature type="turn" evidence="10">
    <location>
        <begin position="460"/>
        <end position="462"/>
    </location>
</feature>
<feature type="helix" evidence="10">
    <location>
        <begin position="463"/>
        <end position="466"/>
    </location>
</feature>
<feature type="strand" evidence="10">
    <location>
        <begin position="474"/>
        <end position="481"/>
    </location>
</feature>
<feature type="helix" evidence="10">
    <location>
        <begin position="484"/>
        <end position="505"/>
    </location>
</feature>
<feature type="helix" evidence="10">
    <location>
        <begin position="513"/>
        <end position="515"/>
    </location>
</feature>
<feature type="helix" evidence="10">
    <location>
        <begin position="516"/>
        <end position="528"/>
    </location>
</feature>
<feature type="strand" evidence="10">
    <location>
        <begin position="530"/>
        <end position="533"/>
    </location>
</feature>
<feature type="helix" evidence="10">
    <location>
        <begin position="540"/>
        <end position="554"/>
    </location>
</feature>
<name>G6PI_PIG</name>
<keyword id="KW-0002">3D-structure</keyword>
<keyword id="KW-0007">Acetylation</keyword>
<keyword id="KW-0202">Cytokine</keyword>
<keyword id="KW-0963">Cytoplasm</keyword>
<keyword id="KW-0903">Direct protein sequencing</keyword>
<keyword id="KW-0312">Gluconeogenesis</keyword>
<keyword id="KW-0324">Glycolysis</keyword>
<keyword id="KW-0379">Hydroxylation</keyword>
<keyword id="KW-0413">Isomerase</keyword>
<keyword id="KW-0597">Phosphoprotein</keyword>
<keyword id="KW-1185">Reference proteome</keyword>
<keyword id="KW-0964">Secreted</keyword>
<keyword id="KW-0832">Ubl conjugation</keyword>
<proteinExistence type="evidence at protein level"/>